<proteinExistence type="inferred from homology"/>
<gene>
    <name type="ordered locus">MJ0062</name>
</gene>
<protein>
    <recommendedName>
        <fullName>Putative threonylcarbamoyl-AMP synthase</fullName>
        <shortName>TC-AMP synthase</shortName>
        <ecNumber>2.7.7.87</ecNumber>
    </recommendedName>
    <alternativeName>
        <fullName>L-threonylcarbamoyladenylate synthase</fullName>
    </alternativeName>
    <alternativeName>
        <fullName>tRNA threonylcarbamoyladenosine biosynthesis protein MJ0062</fullName>
    </alternativeName>
</protein>
<comment type="function">
    <text evidence="1">Required for the formation of a threonylcarbamoyl group on adenosine at position 37 (t(6)A37) in tRNAs that read codons beginning with adenine. Catalyzes the conversion of L-threonine, HCO(3)(-)/CO(2) and ATP to give threonylcarbamoyl-AMP (TC-AMP) as the acyladenylate intermediate, with the release of diphosphate.</text>
</comment>
<comment type="catalytic activity">
    <reaction>
        <text>L-threonine + hydrogencarbonate + ATP = L-threonylcarbamoyladenylate + diphosphate + H2O</text>
        <dbReference type="Rhea" id="RHEA:36407"/>
        <dbReference type="ChEBI" id="CHEBI:15377"/>
        <dbReference type="ChEBI" id="CHEBI:17544"/>
        <dbReference type="ChEBI" id="CHEBI:30616"/>
        <dbReference type="ChEBI" id="CHEBI:33019"/>
        <dbReference type="ChEBI" id="CHEBI:57926"/>
        <dbReference type="ChEBI" id="CHEBI:73682"/>
        <dbReference type="EC" id="2.7.7.87"/>
    </reaction>
</comment>
<comment type="subcellular location">
    <subcellularLocation>
        <location evidence="3">Cytoplasm</location>
    </subcellularLocation>
</comment>
<comment type="similarity">
    <text evidence="3">Belongs to the SUA5 family.</text>
</comment>
<reference key="1">
    <citation type="journal article" date="1996" name="Science">
        <title>Complete genome sequence of the methanogenic archaeon, Methanococcus jannaschii.</title>
        <authorList>
            <person name="Bult C.J."/>
            <person name="White O."/>
            <person name="Olsen G.J."/>
            <person name="Zhou L."/>
            <person name="Fleischmann R.D."/>
            <person name="Sutton G.G."/>
            <person name="Blake J.A."/>
            <person name="FitzGerald L.M."/>
            <person name="Clayton R.A."/>
            <person name="Gocayne J.D."/>
            <person name="Kerlavage A.R."/>
            <person name="Dougherty B.A."/>
            <person name="Tomb J.-F."/>
            <person name="Adams M.D."/>
            <person name="Reich C.I."/>
            <person name="Overbeek R."/>
            <person name="Kirkness E.F."/>
            <person name="Weinstock K.G."/>
            <person name="Merrick J.M."/>
            <person name="Glodek A."/>
            <person name="Scott J.L."/>
            <person name="Geoghagen N.S.M."/>
            <person name="Weidman J.F."/>
            <person name="Fuhrmann J.L."/>
            <person name="Nguyen D."/>
            <person name="Utterback T.R."/>
            <person name="Kelley J.M."/>
            <person name="Peterson J.D."/>
            <person name="Sadow P.W."/>
            <person name="Hanna M.C."/>
            <person name="Cotton M.D."/>
            <person name="Roberts K.M."/>
            <person name="Hurst M.A."/>
            <person name="Kaine B.P."/>
            <person name="Borodovsky M."/>
            <person name="Klenk H.-P."/>
            <person name="Fraser C.M."/>
            <person name="Smith H.O."/>
            <person name="Woese C.R."/>
            <person name="Venter J.C."/>
        </authorList>
    </citation>
    <scope>NUCLEOTIDE SEQUENCE [LARGE SCALE GENOMIC DNA]</scope>
    <source>
        <strain>ATCC 43067 / DSM 2661 / JAL-1 / JCM 10045 / NBRC 100440</strain>
    </source>
</reference>
<dbReference type="EC" id="2.7.7.87"/>
<dbReference type="EMBL" id="L77117">
    <property type="protein sequence ID" value="AAB98044.1"/>
    <property type="molecule type" value="Genomic_DNA"/>
</dbReference>
<dbReference type="PIR" id="F64307">
    <property type="entry name" value="F64307"/>
</dbReference>
<dbReference type="RefSeq" id="WP_010869554.1">
    <property type="nucleotide sequence ID" value="NC_000909.1"/>
</dbReference>
<dbReference type="SMR" id="Q60369"/>
<dbReference type="FunCoup" id="Q60369">
    <property type="interactions" value="26"/>
</dbReference>
<dbReference type="STRING" id="243232.MJ_0062"/>
<dbReference type="PaxDb" id="243232-MJ_0062"/>
<dbReference type="EnsemblBacteria" id="AAB98044">
    <property type="protein sequence ID" value="AAB98044"/>
    <property type="gene ID" value="MJ_0062"/>
</dbReference>
<dbReference type="GeneID" id="1450901"/>
<dbReference type="KEGG" id="mja:MJ_0062"/>
<dbReference type="eggNOG" id="arCOG01952">
    <property type="taxonomic scope" value="Archaea"/>
</dbReference>
<dbReference type="HOGENOM" id="CLU_031397_3_2_2"/>
<dbReference type="InParanoid" id="Q60369"/>
<dbReference type="OrthoDB" id="39992at2157"/>
<dbReference type="PhylomeDB" id="Q60369"/>
<dbReference type="Proteomes" id="UP000000805">
    <property type="component" value="Chromosome"/>
</dbReference>
<dbReference type="GO" id="GO:0005737">
    <property type="term" value="C:cytoplasm"/>
    <property type="evidence" value="ECO:0000318"/>
    <property type="project" value="GO_Central"/>
</dbReference>
<dbReference type="GO" id="GO:0005524">
    <property type="term" value="F:ATP binding"/>
    <property type="evidence" value="ECO:0007669"/>
    <property type="project" value="UniProtKB-KW"/>
</dbReference>
<dbReference type="GO" id="GO:0003725">
    <property type="term" value="F:double-stranded RNA binding"/>
    <property type="evidence" value="ECO:0007669"/>
    <property type="project" value="InterPro"/>
</dbReference>
<dbReference type="GO" id="GO:0061710">
    <property type="term" value="F:L-threonylcarbamoyladenylate synthase"/>
    <property type="evidence" value="ECO:0007669"/>
    <property type="project" value="UniProtKB-EC"/>
</dbReference>
<dbReference type="GO" id="GO:0016779">
    <property type="term" value="F:nucleotidyltransferase activity"/>
    <property type="evidence" value="ECO:0000318"/>
    <property type="project" value="GO_Central"/>
</dbReference>
<dbReference type="GO" id="GO:0000049">
    <property type="term" value="F:tRNA binding"/>
    <property type="evidence" value="ECO:0000318"/>
    <property type="project" value="GO_Central"/>
</dbReference>
<dbReference type="GO" id="GO:0006450">
    <property type="term" value="P:regulation of translational fidelity"/>
    <property type="evidence" value="ECO:0000318"/>
    <property type="project" value="GO_Central"/>
</dbReference>
<dbReference type="GO" id="GO:0008033">
    <property type="term" value="P:tRNA processing"/>
    <property type="evidence" value="ECO:0007669"/>
    <property type="project" value="UniProtKB-KW"/>
</dbReference>
<dbReference type="FunFam" id="3.90.870.10:FF:000028">
    <property type="entry name" value="Sua5/YciO/YrdC/YwlC family protein"/>
    <property type="match status" value="1"/>
</dbReference>
<dbReference type="Gene3D" id="3.90.870.10">
    <property type="entry name" value="DHBP synthase"/>
    <property type="match status" value="1"/>
</dbReference>
<dbReference type="InterPro" id="IPR017945">
    <property type="entry name" value="DHBP_synth_RibB-like_a/b_dom"/>
</dbReference>
<dbReference type="InterPro" id="IPR006070">
    <property type="entry name" value="Sua5-like_dom"/>
</dbReference>
<dbReference type="InterPro" id="IPR050156">
    <property type="entry name" value="TC-AMP_synthase_SUA5"/>
</dbReference>
<dbReference type="NCBIfam" id="TIGR00057">
    <property type="entry name" value="L-threonylcarbamoyladenylate synthase"/>
    <property type="match status" value="1"/>
</dbReference>
<dbReference type="PANTHER" id="PTHR17490">
    <property type="entry name" value="SUA5"/>
    <property type="match status" value="1"/>
</dbReference>
<dbReference type="PANTHER" id="PTHR17490:SF16">
    <property type="entry name" value="THREONYLCARBAMOYL-AMP SYNTHASE"/>
    <property type="match status" value="1"/>
</dbReference>
<dbReference type="Pfam" id="PF01300">
    <property type="entry name" value="Sua5_yciO_yrdC"/>
    <property type="match status" value="1"/>
</dbReference>
<dbReference type="SUPFAM" id="SSF55821">
    <property type="entry name" value="YrdC/RibB"/>
    <property type="match status" value="1"/>
</dbReference>
<dbReference type="PROSITE" id="PS51163">
    <property type="entry name" value="YRDC"/>
    <property type="match status" value="1"/>
</dbReference>
<accession>Q60369</accession>
<sequence length="207" mass="23496">MGLKNKIIKIYELNEEERKKVLEFLKKEILNGKIVICGTDTLYGISANALNEKAVRKVYNIKRREFNKPLSICVRDKNEIEKYAYVNDLAKKIIDKFLPGPLTIILKKKPGIPDIVAKDYIGIRIPDEPIIRELSIVPLTTTSANISGKESPTTVDEIDKEVLKKVDYVIDIGKCKYSKPSTIIKIEDDKIISIREGVIPIQKLARC</sequence>
<keyword id="KW-0067">ATP-binding</keyword>
<keyword id="KW-0963">Cytoplasm</keyword>
<keyword id="KW-0547">Nucleotide-binding</keyword>
<keyword id="KW-0548">Nucleotidyltransferase</keyword>
<keyword id="KW-1185">Reference proteome</keyword>
<keyword id="KW-0808">Transferase</keyword>
<keyword id="KW-0819">tRNA processing</keyword>
<feature type="chain" id="PRO_0000202028" description="Putative threonylcarbamoyl-AMP synthase">
    <location>
        <begin position="1"/>
        <end position="207"/>
    </location>
</feature>
<feature type="domain" description="YrdC-like" evidence="2">
    <location>
        <begin position="15"/>
        <end position="199"/>
    </location>
</feature>
<organism>
    <name type="scientific">Methanocaldococcus jannaschii (strain ATCC 43067 / DSM 2661 / JAL-1 / JCM 10045 / NBRC 100440)</name>
    <name type="common">Methanococcus jannaschii</name>
    <dbReference type="NCBI Taxonomy" id="243232"/>
    <lineage>
        <taxon>Archaea</taxon>
        <taxon>Methanobacteriati</taxon>
        <taxon>Methanobacteriota</taxon>
        <taxon>Methanomada group</taxon>
        <taxon>Methanococci</taxon>
        <taxon>Methanococcales</taxon>
        <taxon>Methanocaldococcaceae</taxon>
        <taxon>Methanocaldococcus</taxon>
    </lineage>
</organism>
<evidence type="ECO:0000250" key="1"/>
<evidence type="ECO:0000255" key="2">
    <source>
        <dbReference type="PROSITE-ProRule" id="PRU00518"/>
    </source>
</evidence>
<evidence type="ECO:0000305" key="3"/>
<name>TSAC_METJA</name>